<comment type="function">
    <text evidence="1">Removes the formyl group from the N-terminal Met of newly synthesized proteins. Requires at least a dipeptide for an efficient rate of reaction. N-terminal L-methionine is a prerequisite for activity but the enzyme has broad specificity at other positions.</text>
</comment>
<comment type="catalytic activity">
    <reaction evidence="1">
        <text>N-terminal N-formyl-L-methionyl-[peptide] + H2O = N-terminal L-methionyl-[peptide] + formate</text>
        <dbReference type="Rhea" id="RHEA:24420"/>
        <dbReference type="Rhea" id="RHEA-COMP:10639"/>
        <dbReference type="Rhea" id="RHEA-COMP:10640"/>
        <dbReference type="ChEBI" id="CHEBI:15377"/>
        <dbReference type="ChEBI" id="CHEBI:15740"/>
        <dbReference type="ChEBI" id="CHEBI:49298"/>
        <dbReference type="ChEBI" id="CHEBI:64731"/>
        <dbReference type="EC" id="3.5.1.88"/>
    </reaction>
</comment>
<comment type="cofactor">
    <cofactor evidence="1">
        <name>Fe(2+)</name>
        <dbReference type="ChEBI" id="CHEBI:29033"/>
    </cofactor>
    <text evidence="1">Binds 1 Fe(2+) ion.</text>
</comment>
<comment type="similarity">
    <text evidence="1">Belongs to the polypeptide deformylase family.</text>
</comment>
<organism>
    <name type="scientific">Shewanella oneidensis (strain ATCC 700550 / JCM 31522 / CIP 106686 / LMG 19005 / NCIMB 14063 / MR-1)</name>
    <dbReference type="NCBI Taxonomy" id="211586"/>
    <lineage>
        <taxon>Bacteria</taxon>
        <taxon>Pseudomonadati</taxon>
        <taxon>Pseudomonadota</taxon>
        <taxon>Gammaproteobacteria</taxon>
        <taxon>Alteromonadales</taxon>
        <taxon>Shewanellaceae</taxon>
        <taxon>Shewanella</taxon>
    </lineage>
</organism>
<reference key="1">
    <citation type="journal article" date="2002" name="Nat. Biotechnol.">
        <title>Genome sequence of the dissimilatory metal ion-reducing bacterium Shewanella oneidensis.</title>
        <authorList>
            <person name="Heidelberg J.F."/>
            <person name="Paulsen I.T."/>
            <person name="Nelson K.E."/>
            <person name="Gaidos E.J."/>
            <person name="Nelson W.C."/>
            <person name="Read T.D."/>
            <person name="Eisen J.A."/>
            <person name="Seshadri R."/>
            <person name="Ward N.L."/>
            <person name="Methe B.A."/>
            <person name="Clayton R.A."/>
            <person name="Meyer T."/>
            <person name="Tsapin A."/>
            <person name="Scott J."/>
            <person name="Beanan M.J."/>
            <person name="Brinkac L.M."/>
            <person name="Daugherty S.C."/>
            <person name="DeBoy R.T."/>
            <person name="Dodson R.J."/>
            <person name="Durkin A.S."/>
            <person name="Haft D.H."/>
            <person name="Kolonay J.F."/>
            <person name="Madupu R."/>
            <person name="Peterson J.D."/>
            <person name="Umayam L.A."/>
            <person name="White O."/>
            <person name="Wolf A.M."/>
            <person name="Vamathevan J.J."/>
            <person name="Weidman J.F."/>
            <person name="Impraim M."/>
            <person name="Lee K."/>
            <person name="Berry K.J."/>
            <person name="Lee C."/>
            <person name="Mueller J."/>
            <person name="Khouri H.M."/>
            <person name="Gill J."/>
            <person name="Utterback T.R."/>
            <person name="McDonald L.A."/>
            <person name="Feldblyum T.V."/>
            <person name="Smith H.O."/>
            <person name="Venter J.C."/>
            <person name="Nealson K.H."/>
            <person name="Fraser C.M."/>
        </authorList>
    </citation>
    <scope>NUCLEOTIDE SEQUENCE [LARGE SCALE GENOMIC DNA]</scope>
    <source>
        <strain>ATCC 700550 / JCM 31522 / CIP 106686 / LMG 19005 / NCIMB 14063 / MR-1</strain>
    </source>
</reference>
<name>DEF2_SHEON</name>
<protein>
    <recommendedName>
        <fullName evidence="1">Peptide deformylase 2</fullName>
        <shortName evidence="1">PDF 2</shortName>
        <ecNumber evidence="1">3.5.1.88</ecNumber>
    </recommendedName>
    <alternativeName>
        <fullName evidence="1">Polypeptide deformylase 2</fullName>
    </alternativeName>
</protein>
<proteinExistence type="inferred from homology"/>
<sequence length="181" mass="20325">MFKDEMRQTPNKPLPIAVVGEAILKQQAIEVRDFDDTLSQLASQMAASMVEAKGVGIAAPQVHSPLALFIMASRPNERYPDAPLMEPLVVVNPQIVLRSLQLEKGEEGCLSVPGQRFTIWRPQTIVVRYQNLAGQWQHSELTGFIARIFQHEFDHLQGITLLERSQMPEQKLMAQEGKPQA</sequence>
<evidence type="ECO:0000255" key="1">
    <source>
        <dbReference type="HAMAP-Rule" id="MF_00163"/>
    </source>
</evidence>
<keyword id="KW-0378">Hydrolase</keyword>
<keyword id="KW-0408">Iron</keyword>
<keyword id="KW-0479">Metal-binding</keyword>
<keyword id="KW-0648">Protein biosynthesis</keyword>
<keyword id="KW-1185">Reference proteome</keyword>
<dbReference type="EC" id="3.5.1.88" evidence="1"/>
<dbReference type="EMBL" id="AE014299">
    <property type="protein sequence ID" value="AAN54134.1"/>
    <property type="molecule type" value="Genomic_DNA"/>
</dbReference>
<dbReference type="RefSeq" id="NP_716689.1">
    <property type="nucleotide sequence ID" value="NC_004347.2"/>
</dbReference>
<dbReference type="RefSeq" id="WP_011071316.1">
    <property type="nucleotide sequence ID" value="NC_004347.2"/>
</dbReference>
<dbReference type="SMR" id="Q8EHZ2"/>
<dbReference type="STRING" id="211586.SO_1062"/>
<dbReference type="PaxDb" id="211586-SO_1062"/>
<dbReference type="KEGG" id="son:SO_1062"/>
<dbReference type="PATRIC" id="fig|211586.12.peg.1019"/>
<dbReference type="eggNOG" id="COG0242">
    <property type="taxonomic scope" value="Bacteria"/>
</dbReference>
<dbReference type="HOGENOM" id="CLU_061901_5_2_6"/>
<dbReference type="OrthoDB" id="9804313at2"/>
<dbReference type="PhylomeDB" id="Q8EHZ2"/>
<dbReference type="BioCyc" id="SONE211586:G1GMP-981-MONOMER"/>
<dbReference type="Proteomes" id="UP000008186">
    <property type="component" value="Chromosome"/>
</dbReference>
<dbReference type="GO" id="GO:0046872">
    <property type="term" value="F:metal ion binding"/>
    <property type="evidence" value="ECO:0007669"/>
    <property type="project" value="UniProtKB-KW"/>
</dbReference>
<dbReference type="GO" id="GO:0042586">
    <property type="term" value="F:peptide deformylase activity"/>
    <property type="evidence" value="ECO:0000318"/>
    <property type="project" value="GO_Central"/>
</dbReference>
<dbReference type="GO" id="GO:0043686">
    <property type="term" value="P:co-translational protein modification"/>
    <property type="evidence" value="ECO:0000318"/>
    <property type="project" value="GO_Central"/>
</dbReference>
<dbReference type="GO" id="GO:0006412">
    <property type="term" value="P:translation"/>
    <property type="evidence" value="ECO:0007669"/>
    <property type="project" value="UniProtKB-UniRule"/>
</dbReference>
<dbReference type="CDD" id="cd00487">
    <property type="entry name" value="Pep_deformylase"/>
    <property type="match status" value="1"/>
</dbReference>
<dbReference type="FunFam" id="3.90.45.10:FF:000002">
    <property type="entry name" value="Peptide deformylase"/>
    <property type="match status" value="1"/>
</dbReference>
<dbReference type="Gene3D" id="3.90.45.10">
    <property type="entry name" value="Peptide deformylase"/>
    <property type="match status" value="1"/>
</dbReference>
<dbReference type="HAMAP" id="MF_00163">
    <property type="entry name" value="Pep_deformylase"/>
    <property type="match status" value="1"/>
</dbReference>
<dbReference type="InterPro" id="IPR023635">
    <property type="entry name" value="Peptide_deformylase"/>
</dbReference>
<dbReference type="InterPro" id="IPR036821">
    <property type="entry name" value="Peptide_deformylase_sf"/>
</dbReference>
<dbReference type="NCBIfam" id="TIGR00079">
    <property type="entry name" value="pept_deformyl"/>
    <property type="match status" value="1"/>
</dbReference>
<dbReference type="NCBIfam" id="NF001159">
    <property type="entry name" value="PRK00150.1-3"/>
    <property type="match status" value="1"/>
</dbReference>
<dbReference type="PANTHER" id="PTHR10458">
    <property type="entry name" value="PEPTIDE DEFORMYLASE"/>
    <property type="match status" value="1"/>
</dbReference>
<dbReference type="PANTHER" id="PTHR10458:SF21">
    <property type="entry name" value="PEPTIDE DEFORMYLASE"/>
    <property type="match status" value="1"/>
</dbReference>
<dbReference type="Pfam" id="PF01327">
    <property type="entry name" value="Pep_deformylase"/>
    <property type="match status" value="1"/>
</dbReference>
<dbReference type="PIRSF" id="PIRSF004749">
    <property type="entry name" value="Pep_def"/>
    <property type="match status" value="1"/>
</dbReference>
<dbReference type="PRINTS" id="PR01576">
    <property type="entry name" value="PDEFORMYLASE"/>
</dbReference>
<dbReference type="SUPFAM" id="SSF56420">
    <property type="entry name" value="Peptide deformylase"/>
    <property type="match status" value="1"/>
</dbReference>
<gene>
    <name evidence="1" type="primary">def2</name>
    <name type="ordered locus">SO_1062</name>
</gene>
<accession>Q8EHZ2</accession>
<feature type="chain" id="PRO_0000082835" description="Peptide deformylase 2">
    <location>
        <begin position="1"/>
        <end position="181"/>
    </location>
</feature>
<feature type="active site" evidence="1">
    <location>
        <position position="152"/>
    </location>
</feature>
<feature type="binding site" evidence="1">
    <location>
        <position position="109"/>
    </location>
    <ligand>
        <name>Fe cation</name>
        <dbReference type="ChEBI" id="CHEBI:24875"/>
    </ligand>
</feature>
<feature type="binding site" evidence="1">
    <location>
        <position position="151"/>
    </location>
    <ligand>
        <name>Fe cation</name>
        <dbReference type="ChEBI" id="CHEBI:24875"/>
    </ligand>
</feature>
<feature type="binding site" evidence="1">
    <location>
        <position position="155"/>
    </location>
    <ligand>
        <name>Fe cation</name>
        <dbReference type="ChEBI" id="CHEBI:24875"/>
    </ligand>
</feature>